<organism>
    <name type="scientific">Bacillus subtilis (strain 168)</name>
    <dbReference type="NCBI Taxonomy" id="224308"/>
    <lineage>
        <taxon>Bacteria</taxon>
        <taxon>Bacillati</taxon>
        <taxon>Bacillota</taxon>
        <taxon>Bacilli</taxon>
        <taxon>Bacillales</taxon>
        <taxon>Bacillaceae</taxon>
        <taxon>Bacillus</taxon>
    </lineage>
</organism>
<comment type="subcellular location">
    <subcellularLocation>
        <location evidence="2">Cell membrane</location>
        <topology evidence="2">Multi-pass membrane protein</topology>
    </subcellularLocation>
</comment>
<comment type="similarity">
    <text evidence="2">Belongs to the UPF0716 (FxsA) family.</text>
</comment>
<feature type="chain" id="PRO_0000360661" description="UPF0716 protein YtzA">
    <location>
        <begin position="1"/>
        <end position="127"/>
    </location>
</feature>
<feature type="transmembrane region" description="Helical" evidence="1">
    <location>
        <begin position="3"/>
        <end position="22"/>
    </location>
</feature>
<feature type="transmembrane region" description="Helical" evidence="1">
    <location>
        <begin position="26"/>
        <end position="46"/>
    </location>
</feature>
<feature type="transmembrane region" description="Helical" evidence="1">
    <location>
        <begin position="70"/>
        <end position="90"/>
    </location>
</feature>
<feature type="transmembrane region" description="Helical" evidence="1">
    <location>
        <begin position="93"/>
        <end position="115"/>
    </location>
</feature>
<proteinExistence type="inferred from homology"/>
<name>YTZA_BACSU</name>
<evidence type="ECO:0000255" key="1"/>
<evidence type="ECO:0000305" key="2"/>
<dbReference type="EMBL" id="AL009126">
    <property type="protein sequence ID" value="CAB14877.1"/>
    <property type="molecule type" value="Genomic_DNA"/>
</dbReference>
<dbReference type="PIR" id="C70004">
    <property type="entry name" value="C70004"/>
</dbReference>
<dbReference type="RefSeq" id="NP_390795.1">
    <property type="nucleotide sequence ID" value="NC_000964.3"/>
</dbReference>
<dbReference type="RefSeq" id="WP_003246085.1">
    <property type="nucleotide sequence ID" value="NZ_OZ025638.1"/>
</dbReference>
<dbReference type="FunCoup" id="O32064">
    <property type="interactions" value="29"/>
</dbReference>
<dbReference type="STRING" id="224308.BSU29170"/>
<dbReference type="PaxDb" id="224308-BSU29170"/>
<dbReference type="EnsemblBacteria" id="CAB14877">
    <property type="protein sequence ID" value="CAB14877"/>
    <property type="gene ID" value="BSU_29170"/>
</dbReference>
<dbReference type="GeneID" id="937382"/>
<dbReference type="KEGG" id="bsu:BSU29170"/>
<dbReference type="PATRIC" id="fig|224308.179.peg.3167"/>
<dbReference type="eggNOG" id="COG3030">
    <property type="taxonomic scope" value="Bacteria"/>
</dbReference>
<dbReference type="InParanoid" id="O32064"/>
<dbReference type="OrthoDB" id="9792788at2"/>
<dbReference type="PhylomeDB" id="O32064"/>
<dbReference type="BioCyc" id="BSUB:BSU29170-MONOMER"/>
<dbReference type="Proteomes" id="UP000001570">
    <property type="component" value="Chromosome"/>
</dbReference>
<dbReference type="GO" id="GO:0005886">
    <property type="term" value="C:plasma membrane"/>
    <property type="evidence" value="ECO:0000318"/>
    <property type="project" value="GO_Central"/>
</dbReference>
<dbReference type="InterPro" id="IPR007313">
    <property type="entry name" value="FxsA"/>
</dbReference>
<dbReference type="NCBIfam" id="NF008528">
    <property type="entry name" value="PRK11463.1-2"/>
    <property type="match status" value="1"/>
</dbReference>
<dbReference type="PANTHER" id="PTHR35335">
    <property type="entry name" value="UPF0716 PROTEIN FXSA"/>
    <property type="match status" value="1"/>
</dbReference>
<dbReference type="PANTHER" id="PTHR35335:SF1">
    <property type="entry name" value="UPF0716 PROTEIN FXSA"/>
    <property type="match status" value="1"/>
</dbReference>
<dbReference type="Pfam" id="PF04186">
    <property type="entry name" value="FxsA"/>
    <property type="match status" value="1"/>
</dbReference>
<accession>O32064</accession>
<gene>
    <name type="primary">ytzA</name>
    <name type="ordered locus">BSU29170</name>
</gene>
<keyword id="KW-1003">Cell membrane</keyword>
<keyword id="KW-0472">Membrane</keyword>
<keyword id="KW-1185">Reference proteome</keyword>
<keyword id="KW-0812">Transmembrane</keyword>
<keyword id="KW-1133">Transmembrane helix</keyword>
<reference key="1">
    <citation type="journal article" date="1997" name="Nature">
        <title>The complete genome sequence of the Gram-positive bacterium Bacillus subtilis.</title>
        <authorList>
            <person name="Kunst F."/>
            <person name="Ogasawara N."/>
            <person name="Moszer I."/>
            <person name="Albertini A.M."/>
            <person name="Alloni G."/>
            <person name="Azevedo V."/>
            <person name="Bertero M.G."/>
            <person name="Bessieres P."/>
            <person name="Bolotin A."/>
            <person name="Borchert S."/>
            <person name="Borriss R."/>
            <person name="Boursier L."/>
            <person name="Brans A."/>
            <person name="Braun M."/>
            <person name="Brignell S.C."/>
            <person name="Bron S."/>
            <person name="Brouillet S."/>
            <person name="Bruschi C.V."/>
            <person name="Caldwell B."/>
            <person name="Capuano V."/>
            <person name="Carter N.M."/>
            <person name="Choi S.-K."/>
            <person name="Codani J.-J."/>
            <person name="Connerton I.F."/>
            <person name="Cummings N.J."/>
            <person name="Daniel R.A."/>
            <person name="Denizot F."/>
            <person name="Devine K.M."/>
            <person name="Duesterhoeft A."/>
            <person name="Ehrlich S.D."/>
            <person name="Emmerson P.T."/>
            <person name="Entian K.-D."/>
            <person name="Errington J."/>
            <person name="Fabret C."/>
            <person name="Ferrari E."/>
            <person name="Foulger D."/>
            <person name="Fritz C."/>
            <person name="Fujita M."/>
            <person name="Fujita Y."/>
            <person name="Fuma S."/>
            <person name="Galizzi A."/>
            <person name="Galleron N."/>
            <person name="Ghim S.-Y."/>
            <person name="Glaser P."/>
            <person name="Goffeau A."/>
            <person name="Golightly E.J."/>
            <person name="Grandi G."/>
            <person name="Guiseppi G."/>
            <person name="Guy B.J."/>
            <person name="Haga K."/>
            <person name="Haiech J."/>
            <person name="Harwood C.R."/>
            <person name="Henaut A."/>
            <person name="Hilbert H."/>
            <person name="Holsappel S."/>
            <person name="Hosono S."/>
            <person name="Hullo M.-F."/>
            <person name="Itaya M."/>
            <person name="Jones L.-M."/>
            <person name="Joris B."/>
            <person name="Karamata D."/>
            <person name="Kasahara Y."/>
            <person name="Klaerr-Blanchard M."/>
            <person name="Klein C."/>
            <person name="Kobayashi Y."/>
            <person name="Koetter P."/>
            <person name="Koningstein G."/>
            <person name="Krogh S."/>
            <person name="Kumano M."/>
            <person name="Kurita K."/>
            <person name="Lapidus A."/>
            <person name="Lardinois S."/>
            <person name="Lauber J."/>
            <person name="Lazarevic V."/>
            <person name="Lee S.-M."/>
            <person name="Levine A."/>
            <person name="Liu H."/>
            <person name="Masuda S."/>
            <person name="Mauel C."/>
            <person name="Medigue C."/>
            <person name="Medina N."/>
            <person name="Mellado R.P."/>
            <person name="Mizuno M."/>
            <person name="Moestl D."/>
            <person name="Nakai S."/>
            <person name="Noback M."/>
            <person name="Noone D."/>
            <person name="O'Reilly M."/>
            <person name="Ogawa K."/>
            <person name="Ogiwara A."/>
            <person name="Oudega B."/>
            <person name="Park S.-H."/>
            <person name="Parro V."/>
            <person name="Pohl T.M."/>
            <person name="Portetelle D."/>
            <person name="Porwollik S."/>
            <person name="Prescott A.M."/>
            <person name="Presecan E."/>
            <person name="Pujic P."/>
            <person name="Purnelle B."/>
            <person name="Rapoport G."/>
            <person name="Rey M."/>
            <person name="Reynolds S."/>
            <person name="Rieger M."/>
            <person name="Rivolta C."/>
            <person name="Rocha E."/>
            <person name="Roche B."/>
            <person name="Rose M."/>
            <person name="Sadaie Y."/>
            <person name="Sato T."/>
            <person name="Scanlan E."/>
            <person name="Schleich S."/>
            <person name="Schroeter R."/>
            <person name="Scoffone F."/>
            <person name="Sekiguchi J."/>
            <person name="Sekowska A."/>
            <person name="Seror S.J."/>
            <person name="Serror P."/>
            <person name="Shin B.-S."/>
            <person name="Soldo B."/>
            <person name="Sorokin A."/>
            <person name="Tacconi E."/>
            <person name="Takagi T."/>
            <person name="Takahashi H."/>
            <person name="Takemaru K."/>
            <person name="Takeuchi M."/>
            <person name="Tamakoshi A."/>
            <person name="Tanaka T."/>
            <person name="Terpstra P."/>
            <person name="Tognoni A."/>
            <person name="Tosato V."/>
            <person name="Uchiyama S."/>
            <person name="Vandenbol M."/>
            <person name="Vannier F."/>
            <person name="Vassarotti A."/>
            <person name="Viari A."/>
            <person name="Wambutt R."/>
            <person name="Wedler E."/>
            <person name="Wedler H."/>
            <person name="Weitzenegger T."/>
            <person name="Winters P."/>
            <person name="Wipat A."/>
            <person name="Yamamoto H."/>
            <person name="Yamane K."/>
            <person name="Yasumoto K."/>
            <person name="Yata K."/>
            <person name="Yoshida K."/>
            <person name="Yoshikawa H.-F."/>
            <person name="Zumstein E."/>
            <person name="Yoshikawa H."/>
            <person name="Danchin A."/>
        </authorList>
    </citation>
    <scope>NUCLEOTIDE SEQUENCE [LARGE SCALE GENOMIC DNA]</scope>
    <source>
        <strain>168</strain>
    </source>
</reference>
<protein>
    <recommendedName>
        <fullName>UPF0716 protein YtzA</fullName>
    </recommendedName>
</protein>
<sequence length="127" mass="14097">MRFLFLLFIVFPAIEIGIFLFLGNLIGILPTVLFMILTGIIGAAAAKKQGTEVYYKVQRDLQYGKMPGEAIADGLCIFIGGLLLMLPGFLSDLAGACLLIPFTRGWCKPILFKWLRGMSKNKRIIIK</sequence>